<reference key="1">
    <citation type="journal article" date="1989" name="Mol. Gen. Genet.">
        <title>Gene cloning shows the alpha-toxin of Clostridium perfringens to contain both sphingomyelinase and lecithinase activities.</title>
        <authorList>
            <person name="Saint-Joanis B."/>
            <person name="Garnier T."/>
            <person name="Cole S.T."/>
        </authorList>
    </citation>
    <scope>NUCLEOTIDE SEQUENCE [GENOMIC DNA]</scope>
    <scope>CHARACTERIZATION</scope>
    <source>
        <strain>8-6 / Type A</strain>
    </source>
</reference>
<reference key="2">
    <citation type="journal article" date="1993" name="Infect. Immun.">
        <title>Comparison of the alpha-toxin genes of Clostridium perfringens type A and C strains: evidence for extragenic regulation of transcription.</title>
        <authorList>
            <person name="Katayama S."/>
            <person name="Matsushita O."/>
            <person name="Minami J."/>
            <person name="Mizobuchi S."/>
            <person name="Okabe A."/>
        </authorList>
    </citation>
    <scope>NUCLEOTIDE SEQUENCE [GENOMIC DNA]</scope>
    <source>
        <strain>ATCC 3628 / NCIMB 10662 / Type C</strain>
    </source>
</reference>
<reference key="3">
    <citation type="journal article" date="1995" name="J. Bacteriol.">
        <title>Phylogenetic analysis of phospholipase C genes from Clostridium perfringens types A to E and Clostridium novyi.</title>
        <authorList>
            <person name="Tsutsui K."/>
            <person name="Minami J."/>
            <person name="Matsushita O."/>
            <person name="Katayama S."/>
            <person name="Taniguchi Y."/>
            <person name="Nakamura S."/>
            <person name="Nishioka M."/>
            <person name="Okabe A."/>
        </authorList>
    </citation>
    <scope>NUCLEOTIDE SEQUENCE [GENOMIC DNA]</scope>
    <source>
        <strain>13 / Type A</strain>
        <strain>ATCC 10543 / DSM 798 / NCIB 8875 / BP6K / Type A</strain>
        <strain>ATCC 27324 / NCIMB 10748 / NCTC 13111 / Type E</strain>
        <strain>ATCC 3626 / NCIMB 10691 / Type B</strain>
        <strain>KZ211 / Type A</strain>
        <strain>L9 / Type D</strain>
        <strain>NCIMB 10663 / NCTC 13109 / Type D</strain>
    </source>
</reference>
<reference key="4">
    <citation type="journal article" date="1996" name="Microbiology">
        <title>Molecular variation between the alpha-toxins from the type strain (NCTC 8237) and clinical isolates of Clostridium perfringens associated with disease in man and animals.</title>
        <authorList>
            <person name="Ginter A."/>
            <person name="Williamson E.D."/>
            <person name="Dessy F."/>
            <person name="Coppe P."/>
            <person name="Bullifent H."/>
            <person name="Howells A.M."/>
            <person name="Titball R.W."/>
        </authorList>
    </citation>
    <scope>NUCLEOTIDE SEQUENCE [GENOMIC DNA]</scope>
    <scope>USE AS A VACCINE</scope>
    <source>
        <strain>13 / Type A</strain>
        <strain>CER 89L1105 / Type A</strain>
        <strain>CER 89L1216 / Type A</strain>
        <strain>CER 89L43 / Type A</strain>
    </source>
</reference>
<reference key="5">
    <citation type="journal article" date="1996" name="Microbiol. Immunol.">
        <title>Analysis of the phospholipase C gene of Clostridium perfringens KZ1340 isolated from Antarctic soil.</title>
        <authorList>
            <person name="Kameyama K."/>
            <person name="Matsushita O."/>
            <person name="Katayama S."/>
            <person name="Minami J."/>
            <person name="Maeda M."/>
            <person name="Nakamura S."/>
            <person name="Okabe A."/>
        </authorList>
    </citation>
    <scope>NUCLEOTIDE SEQUENCE [GENOMIC DNA]</scope>
    <source>
        <strain>KZ1340 / Type A</strain>
    </source>
</reference>
<reference key="6">
    <citation type="journal article" date="2002" name="Proc. Natl. Acad. Sci. U.S.A.">
        <title>Complete genome sequence of Clostridium perfringens, an anaerobic flesh-eater.</title>
        <authorList>
            <person name="Shimizu T."/>
            <person name="Ohtani K."/>
            <person name="Hirakawa H."/>
            <person name="Ohshima K."/>
            <person name="Yamashita A."/>
            <person name="Shiba T."/>
            <person name="Ogasawara N."/>
            <person name="Hattori M."/>
            <person name="Kuhara S."/>
            <person name="Hayashi H."/>
        </authorList>
    </citation>
    <scope>NUCLEOTIDE SEQUENCE [LARGE SCALE GENOMIC DNA]</scope>
    <source>
        <strain>13 / Type A</strain>
    </source>
</reference>
<reference key="7">
    <citation type="journal article" date="1996" name="Infect. Immun.">
        <title>Use of site-directed mutagenesis to probe structure-function relationships of alpha-toxin from Clostridium perfringens.</title>
        <authorList>
            <person name="Guillouard I."/>
            <person name="Garnier T."/>
            <person name="Cole S.T."/>
        </authorList>
    </citation>
    <scope>MUTAGENESIS OF TRP-29; HIS-39; ASP-84; HIS-94; PHE-97; HIS-154; ASP-158; HIS-164; HIS-176 AND GLU-180</scope>
    <source>
        <strain>8-6 / Type A</strain>
    </source>
</reference>
<reference key="8">
    <citation type="journal article" date="1997" name="Mol. Microbiol.">
        <title>The carboxy-terminal C2-like domain of the alpha-toxin from Clostridium perfringens mediates calcium-dependent membrane recognition.</title>
        <authorList>
            <person name="Guillouard I."/>
            <person name="Alzari P.M."/>
            <person name="Saliou B."/>
            <person name="Cole S.T."/>
        </authorList>
    </citation>
    <scope>MUTAGENESIS OF ASP-297; THR-300; TYR-303 AND ASP-364</scope>
    <scope>OTHER CONSERVED ASPARTATE AND TYROSINE RESIDUES</scope>
    <source>
        <strain>8-6 / Type A</strain>
    </source>
</reference>
<reference key="9">
    <citation type="journal article" date="1941" name="Biochem. J.">
        <title>The biochemistry of bacterial toxins. I. The lecithinase activity of Cl.welchii toxins.</title>
        <authorList>
            <person name="Macfarlane M.G."/>
            <person name="Knight B.C.J.G."/>
        </authorList>
    </citation>
    <scope>IDENTIFICATION OF ALPHA-TOXIN AS AN ENZYME</scope>
</reference>
<reference key="10">
    <citation type="journal article" date="1999" name="Infect. Immun.">
        <title>Use of genetically manipulated strains of Clostridium perfringens reveals that both alpha-toxin and theta-toxin are required for vascular leukostasis to occur in experimental gas gangrene.</title>
        <authorList>
            <person name="Ellemor D.M."/>
            <person name="Baird R.N."/>
            <person name="Awad M.M."/>
            <person name="Boyd R.L."/>
            <person name="Rood J.I."/>
            <person name="Emmins J.J."/>
        </authorList>
    </citation>
    <scope>IMPORTANCE IN VIRULENCE OF GAS GANGRENE</scope>
    <source>
        <strain>13 / Type A</strain>
    </source>
</reference>
<reference key="11">
    <citation type="journal article" date="1997" name="J. Infect. Dis.">
        <title>Clostridial gas gangrene: evidence that alpha and theta toxins differentially modulate the immune response and induce acute tissue necrosis.</title>
        <authorList>
            <person name="Stevens D.L."/>
            <person name="Tweten R.K."/>
            <person name="Awad M.M."/>
            <person name="Rood J.I."/>
            <person name="Bryant A.E."/>
        </authorList>
    </citation>
    <scope>EFFECT ON LEUKOCYTE AGGREGATION AND THROMBOSIS</scope>
    <source>
        <strain>JIR325</strain>
    </source>
</reference>
<reference key="12">
    <citation type="journal article" date="1999" name="Anaerobe">
        <title>The Clostridium perfringens alpha-toxin.</title>
        <authorList>
            <person name="Titball R.W."/>
            <person name="Naylor C.E."/>
            <person name="Basak A.K."/>
        </authorList>
    </citation>
    <scope>REVIEW</scope>
</reference>
<reference key="13">
    <citation type="journal article" date="2000" name="Microbes Infect.">
        <title>Structure and function of clostridial phospholipases C.</title>
        <authorList>
            <person name="Jepson M."/>
            <person name="Titball R.W."/>
        </authorList>
    </citation>
    <scope>REVIEW</scope>
</reference>
<reference key="14">
    <citation type="journal article" date="1998" name="Nat. Struct. Biol.">
        <title>Structure of the key toxin in gas gangrene.</title>
        <authorList>
            <person name="Naylor C.E."/>
            <person name="Eaton J.T."/>
            <person name="Howells A.M."/>
            <person name="Justin N."/>
            <person name="Moss D.S."/>
            <person name="Titball R.W."/>
            <person name="Basak A.K."/>
        </authorList>
    </citation>
    <scope>X-RAY CRYSTALLOGRAPHY (1.9 ANGSTROMS) OF 29-398 OF THE OPEN FORM</scope>
    <scope>DISCUSSION OF CATALYSIS</scope>
    <source>
        <strain>CER 89L43 / Type A</strain>
    </source>
</reference>
<reference key="15">
    <citation type="journal article" date="2002" name="J. Mol. Biol.">
        <title>Crystal structure of the C. perfringens alpha-toxin with the active site closed by a flexible loop region.</title>
        <authorList>
            <person name="Eaton J.T."/>
            <person name="Naylor C.E."/>
            <person name="Howells A.M."/>
            <person name="Moss D.S."/>
            <person name="Titball R.W."/>
            <person name="Basak A.K."/>
        </authorList>
    </citation>
    <scope>X-RAY CRYSTALLOGRAPHY (1.9 ANGSTROMS) OF 29-398 OF THE CLOSED FORM</scope>
    <source>
        <strain>CER 89L43 / Type A</strain>
    </source>
</reference>
<gene>
    <name type="primary">plc</name>
    <name type="synonym">cpa</name>
    <name type="ordered locus">CPE0036</name>
</gene>
<comment type="function">
    <text>Bacterial hemolysins are exotoxins that attack blood cell membranes and cause cell rupture. Constitutes an essential virulence factor in gas gangrene. Binds to eukaryotic membranes where it hydrolyzes both phosphatidylcholine and sphingomyelin. The diacylglycerol produced can activate both the arachidonic acid pathway, leading to modulation of the inflammatory response cascade and thrombosis, and protein kinase C, leading to activation of eukaryotic phospholipases and further membrane damage. Acts on human and mouse erythrocytes, but not on rabbit or horse erythrocytes.</text>
</comment>
<comment type="catalytic activity">
    <reaction>
        <text>a 1,2-diacyl-sn-glycero-3-phosphocholine + H2O = phosphocholine + a 1,2-diacyl-sn-glycerol + H(+)</text>
        <dbReference type="Rhea" id="RHEA:10604"/>
        <dbReference type="ChEBI" id="CHEBI:15377"/>
        <dbReference type="ChEBI" id="CHEBI:15378"/>
        <dbReference type="ChEBI" id="CHEBI:17815"/>
        <dbReference type="ChEBI" id="CHEBI:57643"/>
        <dbReference type="ChEBI" id="CHEBI:295975"/>
        <dbReference type="EC" id="3.1.4.3"/>
    </reaction>
</comment>
<comment type="cofactor">
    <cofactor evidence="6">
        <name>Ca(2+)</name>
        <dbReference type="ChEBI" id="CHEBI:29108"/>
    </cofactor>
    <text evidence="6">Binds 3 Ca(2+) ions per subunit.</text>
</comment>
<comment type="cofactor">
    <cofactor>
        <name>Zn(2+)</name>
        <dbReference type="ChEBI" id="CHEBI:29105"/>
    </cofactor>
    <text>Binds 3 Zn(2+) ions per subunit.</text>
</comment>
<comment type="subcellular location">
    <subcellularLocation>
        <location evidence="6">Secreted</location>
    </subcellularLocation>
</comment>
<comment type="domain">
    <text>The protein is composed of 2 domains; the N-terminal domain contains the phospholipase C active site (PLC), in a cleft which is also occupied by the 3 zinc ions. The C-terminal domain is a putative phospholipid-recognition domain, which shows structural homology with phospholipid-binding C2-like domains from a range of eukaryotic proteins. The ability to bind membrane phospholipids in a Ca(2+) dependent manner and toxicity is conferred by this C-terminal domain, which also contributes to the sphingomyelinase activity.</text>
</comment>
<comment type="biotechnology">
    <text>Vaccination of mice with a fragment (residues 275-398) protects them against a subsequent challenge with purified alpha-toxin.</text>
</comment>
<comment type="miscellaneous">
    <text>Variations seen in PLC activity between different strains seem to be due to transcriptional regulation.</text>
</comment>
<comment type="miscellaneous">
    <text>Mutating residues 303 or 359 of the C.perfringens toxin to match those found in C.bifermentans (301 and 358 respectively) reduces toxicity considerably.</text>
</comment>
<comment type="similarity">
    <text evidence="3">Belongs to the bacterial zinc-metallophospholipase C family.</text>
</comment>
<organism>
    <name type="scientific">Clostridium perfringens (strain 13 / Type A)</name>
    <dbReference type="NCBI Taxonomy" id="195102"/>
    <lineage>
        <taxon>Bacteria</taxon>
        <taxon>Bacillati</taxon>
        <taxon>Bacillota</taxon>
        <taxon>Clostridia</taxon>
        <taxon>Eubacteriales</taxon>
        <taxon>Clostridiaceae</taxon>
        <taxon>Clostridium</taxon>
    </lineage>
</organism>
<keyword id="KW-0002">3D-structure</keyword>
<keyword id="KW-0106">Calcium</keyword>
<keyword id="KW-0204">Cytolysis</keyword>
<keyword id="KW-0354">Hemolysis</keyword>
<keyword id="KW-0378">Hydrolase</keyword>
<keyword id="KW-0479">Metal-binding</keyword>
<keyword id="KW-1185">Reference proteome</keyword>
<keyword id="KW-0964">Secreted</keyword>
<keyword id="KW-0732">Signal</keyword>
<keyword id="KW-0800">Toxin</keyword>
<keyword id="KW-0843">Virulence</keyword>
<keyword id="KW-0862">Zinc</keyword>
<sequence length="398" mass="45530">MKRKICKALICATLATSLWAGASTKVYAWDGKIDGTGTHAMIVTQGVSILENDLSKNEPESVRKNLEILKENMHELQLGSTYPDYDKNAYDLYQDHFWDPDTDNNFSKDNSWYLAYSIPDTGESQIRKFSALARYEWQRGNYKQATFYLGEAMHYFGDIDTPYHPANVTAVDSAGHVKFETFAEERKEQYKINTAGCKTNEDFYADILKNKDFNAWSKEYARGFAKTGKSIYYSHASMSHSWDDWDYAAKVTLANSQKGTAGYIYRFLHDVSEGNDPSVGKNVKELVAYISTSGEKDAGTDDYMYFGIKTKDGKTQEWEMDNPGNDFMTGSKDTYTFKLKDENLKIDDIQNMWIRKRKYTAFPDAYKPENIKIIANGKVVVDKDINEWISGNSTYNIK</sequence>
<proteinExistence type="evidence at protein level"/>
<accession>P0C216</accession>
<accession>P15310</accession>
<accession>P94658</accession>
<accession>Q46246</accession>
<accession>Q46279</accession>
<accession>Q46280</accession>
<accession>Q46281</accession>
<accession>Q46282</accession>
<accession>Q57317</accession>
<accession>Q59303</accession>
<accession>Q59304</accession>
<accession>Q59305</accession>
<accession>Q59313</accession>
<accession>Q60121</accession>
<protein>
    <recommendedName>
        <fullName>Phospholipase C</fullName>
        <shortName>PLC</shortName>
        <ecNumber>3.1.4.3</ecNumber>
    </recommendedName>
    <alternativeName>
        <fullName>Alpha-toxin</fullName>
    </alternativeName>
    <alternativeName>
        <fullName>Hemolysin</fullName>
    </alternativeName>
    <alternativeName>
        <fullName>Lecithinase</fullName>
    </alternativeName>
    <alternativeName>
        <fullName>Phosphatidylcholine cholinephosphohydrolase</fullName>
    </alternativeName>
</protein>
<name>PHLC1_CLOPE</name>
<evidence type="ECO:0000250" key="1"/>
<evidence type="ECO:0000255" key="2">
    <source>
        <dbReference type="PROSITE-ProRule" id="PRU00152"/>
    </source>
</evidence>
<evidence type="ECO:0000255" key="3">
    <source>
        <dbReference type="PROSITE-ProRule" id="PRU00678"/>
    </source>
</evidence>
<evidence type="ECO:0000269" key="4">
    <source>
    </source>
</evidence>
<evidence type="ECO:0000269" key="5">
    <source>
    </source>
</evidence>
<evidence type="ECO:0000305" key="6"/>
<evidence type="ECO:0007829" key="7">
    <source>
        <dbReference type="PDB" id="1CA1"/>
    </source>
</evidence>
<dbReference type="EC" id="3.1.4.3"/>
<dbReference type="EMBL" id="X17300">
    <property type="protein sequence ID" value="CAA35186.1"/>
    <property type="molecule type" value="Genomic_DNA"/>
</dbReference>
<dbReference type="EMBL" id="D10248">
    <property type="protein sequence ID" value="BAA01093.1"/>
    <property type="molecule type" value="Genomic_DNA"/>
</dbReference>
<dbReference type="EMBL" id="D32123">
    <property type="protein sequence ID" value="BAA06849.1"/>
    <property type="molecule type" value="Genomic_DNA"/>
</dbReference>
<dbReference type="EMBL" id="D32124">
    <property type="protein sequence ID" value="BAA06850.1"/>
    <property type="molecule type" value="Genomic_DNA"/>
</dbReference>
<dbReference type="EMBL" id="D32126">
    <property type="protein sequence ID" value="BAA06852.1"/>
    <property type="molecule type" value="Genomic_DNA"/>
</dbReference>
<dbReference type="EMBL" id="D32127">
    <property type="protein sequence ID" value="BAA06853.1"/>
    <property type="molecule type" value="Genomic_DNA"/>
</dbReference>
<dbReference type="EMBL" id="D32128">
    <property type="protein sequence ID" value="BAA06854.1"/>
    <property type="molecule type" value="Genomic_DNA"/>
</dbReference>
<dbReference type="EMBL" id="D49968">
    <property type="protein sequence ID" value="BAA08720.1"/>
    <property type="molecule type" value="Genomic_DNA"/>
</dbReference>
<dbReference type="EMBL" id="D49969">
    <property type="protein sequence ID" value="BAA08721.1"/>
    <property type="molecule type" value="Genomic_DNA"/>
</dbReference>
<dbReference type="EMBL" id="L43545">
    <property type="protein sequence ID" value="AAA99192.1"/>
    <property type="molecule type" value="Genomic_DNA"/>
</dbReference>
<dbReference type="EMBL" id="L43546">
    <property type="protein sequence ID" value="AAA99193.1"/>
    <property type="molecule type" value="Genomic_DNA"/>
</dbReference>
<dbReference type="EMBL" id="L43547">
    <property type="protein sequence ID" value="AAA99194.1"/>
    <property type="molecule type" value="Genomic_DNA"/>
</dbReference>
<dbReference type="EMBL" id="L43548">
    <property type="protein sequence ID" value="AAA99195.1"/>
    <property type="molecule type" value="Genomic_DNA"/>
</dbReference>
<dbReference type="EMBL" id="D63911">
    <property type="protein sequence ID" value="BAA09944.1"/>
    <property type="molecule type" value="Genomic_DNA"/>
</dbReference>
<dbReference type="EMBL" id="BA000016">
    <property type="protein sequence ID" value="BAB79742.1"/>
    <property type="molecule type" value="Genomic_DNA"/>
</dbReference>
<dbReference type="PIR" id="B49231">
    <property type="entry name" value="B49231"/>
</dbReference>
<dbReference type="PIR" id="JQ0366">
    <property type="entry name" value="JQ0366"/>
</dbReference>
<dbReference type="RefSeq" id="WP_011009584.1">
    <property type="nucleotide sequence ID" value="NC_003366.1"/>
</dbReference>
<dbReference type="PDB" id="1CA1">
    <property type="method" value="X-ray"/>
    <property type="resolution" value="1.90 A"/>
    <property type="chains" value="A=29-398"/>
</dbReference>
<dbReference type="PDB" id="1GYG">
    <property type="method" value="X-ray"/>
    <property type="resolution" value="1.90 A"/>
    <property type="chains" value="A/B=29-398"/>
</dbReference>
<dbReference type="PDB" id="1QM6">
    <property type="method" value="X-ray"/>
    <property type="resolution" value="2.50 A"/>
    <property type="chains" value="A/B=29-398"/>
</dbReference>
<dbReference type="PDB" id="1QMD">
    <property type="method" value="X-ray"/>
    <property type="resolution" value="2.20 A"/>
    <property type="chains" value="A/B=29-398"/>
</dbReference>
<dbReference type="PDBsum" id="1CA1"/>
<dbReference type="PDBsum" id="1GYG"/>
<dbReference type="PDBsum" id="1QM6"/>
<dbReference type="PDBsum" id="1QMD"/>
<dbReference type="SMR" id="P0C216"/>
<dbReference type="STRING" id="195102.gene:10489266"/>
<dbReference type="KEGG" id="cpe:CPE0036"/>
<dbReference type="HOGENOM" id="CLU_690198_0_0_9"/>
<dbReference type="EvolutionaryTrace" id="P0C216"/>
<dbReference type="Proteomes" id="UP000000818">
    <property type="component" value="Chromosome"/>
</dbReference>
<dbReference type="GO" id="GO:0005576">
    <property type="term" value="C:extracellular region"/>
    <property type="evidence" value="ECO:0007669"/>
    <property type="project" value="UniProtKB-SubCell"/>
</dbReference>
<dbReference type="GO" id="GO:0050429">
    <property type="term" value="F:calcium-dependent phospholipase C activity"/>
    <property type="evidence" value="ECO:0000314"/>
    <property type="project" value="CACAO"/>
</dbReference>
<dbReference type="GO" id="GO:0034480">
    <property type="term" value="F:phosphatidylcholine phospholipase C activity"/>
    <property type="evidence" value="ECO:0007669"/>
    <property type="project" value="UniProtKB-EC"/>
</dbReference>
<dbReference type="GO" id="GO:0090729">
    <property type="term" value="F:toxin activity"/>
    <property type="evidence" value="ECO:0007669"/>
    <property type="project" value="UniProtKB-KW"/>
</dbReference>
<dbReference type="GO" id="GO:0008270">
    <property type="term" value="F:zinc ion binding"/>
    <property type="evidence" value="ECO:0007669"/>
    <property type="project" value="InterPro"/>
</dbReference>
<dbReference type="GO" id="GO:0031640">
    <property type="term" value="P:killing of cells of another organism"/>
    <property type="evidence" value="ECO:0007669"/>
    <property type="project" value="UniProtKB-KW"/>
</dbReference>
<dbReference type="CDD" id="cd00113">
    <property type="entry name" value="PLAT"/>
    <property type="match status" value="1"/>
</dbReference>
<dbReference type="CDD" id="cd10981">
    <property type="entry name" value="ZnPC_S1P1"/>
    <property type="match status" value="1"/>
</dbReference>
<dbReference type="Gene3D" id="1.10.575.10">
    <property type="entry name" value="P1 Nuclease"/>
    <property type="match status" value="1"/>
</dbReference>
<dbReference type="Gene3D" id="2.60.60.20">
    <property type="entry name" value="PLAT/LH2 domain"/>
    <property type="match status" value="1"/>
</dbReference>
<dbReference type="InterPro" id="IPR001024">
    <property type="entry name" value="PLAT/LH2_dom"/>
</dbReference>
<dbReference type="InterPro" id="IPR036392">
    <property type="entry name" value="PLAT/LH2_dom_sf"/>
</dbReference>
<dbReference type="InterPro" id="IPR008947">
    <property type="entry name" value="PLipase_C/P1_nuclease_dom_sf"/>
</dbReference>
<dbReference type="InterPro" id="IPR029002">
    <property type="entry name" value="PLPC/GPLD1"/>
</dbReference>
<dbReference type="InterPro" id="IPR001531">
    <property type="entry name" value="Zn_PLipaseC"/>
</dbReference>
<dbReference type="Pfam" id="PF01477">
    <property type="entry name" value="PLAT"/>
    <property type="match status" value="1"/>
</dbReference>
<dbReference type="Pfam" id="PF00882">
    <property type="entry name" value="Zn_dep_PLPC"/>
    <property type="match status" value="1"/>
</dbReference>
<dbReference type="PRINTS" id="PR00479">
    <property type="entry name" value="PRPHPHLPASEC"/>
</dbReference>
<dbReference type="SMART" id="SM00770">
    <property type="entry name" value="Zn_dep_PLPC"/>
    <property type="match status" value="1"/>
</dbReference>
<dbReference type="SUPFAM" id="SSF49723">
    <property type="entry name" value="Lipase/lipooxygenase domain (PLAT/LH2 domain)"/>
    <property type="match status" value="1"/>
</dbReference>
<dbReference type="SUPFAM" id="SSF48537">
    <property type="entry name" value="Phospholipase C/P1 nuclease"/>
    <property type="match status" value="1"/>
</dbReference>
<dbReference type="PROSITE" id="PS50095">
    <property type="entry name" value="PLAT"/>
    <property type="match status" value="1"/>
</dbReference>
<dbReference type="PROSITE" id="PS00384">
    <property type="entry name" value="PROKAR_ZN_DEPEND_PLPC_1"/>
    <property type="match status" value="1"/>
</dbReference>
<dbReference type="PROSITE" id="PS51346">
    <property type="entry name" value="PROKAR_ZN_DEPEND_PLPC_2"/>
    <property type="match status" value="1"/>
</dbReference>
<feature type="signal peptide" evidence="1">
    <location>
        <begin position="1"/>
        <end position="28"/>
    </location>
</feature>
<feature type="chain" id="PRO_0000023931" description="Phospholipase C">
    <location>
        <begin position="29"/>
        <end position="398"/>
    </location>
</feature>
<feature type="domain" description="Zn-dependent PLC" evidence="3">
    <location>
        <begin position="29"/>
        <end position="278"/>
    </location>
</feature>
<feature type="domain" description="PLAT" evidence="2">
    <location>
        <begin position="284"/>
        <end position="398"/>
    </location>
</feature>
<feature type="region of interest" description="Linker">
    <location>
        <begin position="275"/>
        <end position="283"/>
    </location>
</feature>
<feature type="binding site">
    <location>
        <position position="29"/>
    </location>
    <ligand>
        <name>Zn(2+)</name>
        <dbReference type="ChEBI" id="CHEBI:29105"/>
        <label>1</label>
    </ligand>
</feature>
<feature type="binding site">
    <location>
        <position position="39"/>
    </location>
    <ligand>
        <name>Zn(2+)</name>
        <dbReference type="ChEBI" id="CHEBI:29105"/>
        <label>1</label>
    </ligand>
</feature>
<feature type="binding site">
    <location>
        <position position="84"/>
    </location>
    <ligand>
        <name>Zn(2+)</name>
        <dbReference type="ChEBI" id="CHEBI:29105"/>
        <label>3</label>
    </ligand>
</feature>
<feature type="binding site">
    <location>
        <position position="96"/>
    </location>
    <ligand>
        <name>Zn(2+)</name>
        <dbReference type="ChEBI" id="CHEBI:29105"/>
        <label>3</label>
    </ligand>
</feature>
<feature type="binding site">
    <location>
        <position position="154"/>
    </location>
    <ligand>
        <name>Zn(2+)</name>
        <dbReference type="ChEBI" id="CHEBI:29105"/>
        <label>3</label>
    </ligand>
</feature>
<feature type="binding site">
    <location>
        <position position="158"/>
    </location>
    <ligand>
        <name>Zn(2+)</name>
        <dbReference type="ChEBI" id="CHEBI:29105"/>
        <label>1</label>
    </ligand>
</feature>
<feature type="binding site">
    <location>
        <position position="158"/>
    </location>
    <ligand>
        <name>Zn(2+)</name>
        <dbReference type="ChEBI" id="CHEBI:29105"/>
        <label>3</label>
    </ligand>
</feature>
<feature type="binding site">
    <location>
        <position position="164"/>
    </location>
    <ligand>
        <name>Zn(2+)</name>
        <dbReference type="ChEBI" id="CHEBI:29105"/>
        <label>2</label>
    </ligand>
</feature>
<feature type="binding site">
    <location>
        <position position="176"/>
    </location>
    <ligand>
        <name>Zn(2+)</name>
        <dbReference type="ChEBI" id="CHEBI:29105"/>
        <label>2</label>
    </ligand>
</feature>
<feature type="binding site">
    <location>
        <position position="180"/>
    </location>
    <ligand>
        <name>Zn(2+)</name>
        <dbReference type="ChEBI" id="CHEBI:29105"/>
        <label>2</label>
    </ligand>
</feature>
<feature type="binding site" evidence="6">
    <location>
        <position position="297"/>
    </location>
    <ligand>
        <name>Ca(2+)</name>
        <dbReference type="ChEBI" id="CHEBI:29108"/>
        <label>1</label>
    </ligand>
</feature>
<feature type="binding site" evidence="1">
    <location>
        <position position="299"/>
    </location>
    <ligand>
        <name>Ca(2+)</name>
        <dbReference type="ChEBI" id="CHEBI:29108"/>
        <label>1</label>
    </ligand>
</feature>
<feature type="binding site" evidence="6">
    <location>
        <position position="300"/>
    </location>
    <ligand>
        <name>Ca(2+)</name>
        <dbReference type="ChEBI" id="CHEBI:29108"/>
        <label>3</label>
    </ligand>
</feature>
<feature type="binding site" evidence="1">
    <location>
        <position position="301"/>
    </location>
    <ligand>
        <name>Ca(2+)</name>
        <dbReference type="ChEBI" id="CHEBI:29108"/>
        <label>3</label>
    </ligand>
</feature>
<feature type="binding site" evidence="1">
    <location>
        <position position="321"/>
    </location>
    <ligand>
        <name>Ca(2+)</name>
        <dbReference type="ChEBI" id="CHEBI:29108"/>
        <label>2</label>
    </ligand>
</feature>
<feature type="binding site" evidence="1">
    <location>
        <position position="322"/>
    </location>
    <ligand>
        <name>Ca(2+)</name>
        <dbReference type="ChEBI" id="CHEBI:29108"/>
        <label>2</label>
    </ligand>
</feature>
<feature type="binding site" evidence="1">
    <location>
        <position position="324"/>
    </location>
    <ligand>
        <name>Ca(2+)</name>
        <dbReference type="ChEBI" id="CHEBI:29108"/>
        <label>2</label>
    </ligand>
</feature>
<feature type="binding site" evidence="1">
    <location>
        <position position="325"/>
    </location>
    <ligand>
        <name>Ca(2+)</name>
        <dbReference type="ChEBI" id="CHEBI:29108"/>
        <label>3</label>
    </ligand>
</feature>
<feature type="binding site" evidence="1">
    <location>
        <position position="326"/>
    </location>
    <ligand>
        <name>Ca(2+)</name>
        <dbReference type="ChEBI" id="CHEBI:29108"/>
        <label>2</label>
    </ligand>
</feature>
<feature type="binding site" evidence="1">
    <location>
        <position position="326"/>
    </location>
    <ligand>
        <name>Ca(2+)</name>
        <dbReference type="ChEBI" id="CHEBI:29108"/>
        <label>3</label>
    </ligand>
</feature>
<feature type="binding site" evidence="6">
    <location>
        <position position="364"/>
    </location>
    <ligand>
        <name>Ca(2+)</name>
        <dbReference type="ChEBI" id="CHEBI:29108"/>
        <label>1</label>
    </ligand>
</feature>
<feature type="binding site" evidence="1">
    <location>
        <position position="365"/>
    </location>
    <ligand>
        <name>Ca(2+)</name>
        <dbReference type="ChEBI" id="CHEBI:29108"/>
        <label>1</label>
    </ligand>
</feature>
<feature type="sequence variant" description="In strain: CER 89L1216.">
    <original>K</original>
    <variation>E</variation>
    <location>
        <position position="2"/>
    </location>
</feature>
<feature type="sequence variant" description="In strain: 8-6.">
    <original>I</original>
    <variation>V</variation>
    <location>
        <position position="10"/>
    </location>
</feature>
<feature type="sequence variant" description="In strain: CER 89L1105 and CER 89L1216.">
    <original>TLA</original>
    <variation>ALR</variation>
    <location>
        <begin position="13"/>
        <end position="15"/>
    </location>
</feature>
<feature type="sequence variant" description="In strain: 8-6, KZ211, L9, NCIB 10691, BP6K and KZ1340.">
    <original>T</original>
    <variation>A</variation>
    <location>
        <position position="13"/>
    </location>
</feature>
<feature type="sequence variant" description="In strain: 8-6.">
    <original>A</original>
    <variation>V</variation>
    <location>
        <position position="15"/>
    </location>
</feature>
<feature type="sequence variant" description="In strain: L9 and BP6K.">
    <original>A</original>
    <variation>T</variation>
    <location>
        <position position="22"/>
    </location>
</feature>
<feature type="sequence variant" description="In strain: 8-6.">
    <original>A</original>
    <variation>V</variation>
    <location>
        <position position="22"/>
    </location>
</feature>
<feature type="sequence variant" description="In strain: NCIB 10691.">
    <original>V</original>
    <variation>A</variation>
    <location>
        <position position="43"/>
    </location>
</feature>
<feature type="sequence variant" description="In strain: L9 and KZ1340.">
    <original>V</original>
    <variation>I</variation>
    <location>
        <position position="47"/>
    </location>
</feature>
<feature type="sequence variant" description="In strain: 8-6.">
    <original>L</original>
    <variation>M</variation>
    <location>
        <position position="54"/>
    </location>
</feature>
<feature type="sequence variant" description="In strain: 8-6.">
    <original>E</original>
    <variation>D</variation>
    <location>
        <position position="71"/>
    </location>
</feature>
<feature type="sequence variant" description="In strain: KZ1340.">
    <original>D</original>
    <variation>N</variation>
    <location>
        <position position="91"/>
    </location>
</feature>
<feature type="sequence variant" description="In strain: 8-6.">
    <original>D</original>
    <variation>N</variation>
    <location>
        <position position="103"/>
    </location>
</feature>
<feature type="sequence variant" description="In strain: KZ1340; probably inactive.">
    <original>H</original>
    <variation>Y</variation>
    <location>
        <position position="176"/>
    </location>
</feature>
<feature type="sequence variant" description="In strain: 8-6, NCIB 10663 and NCIB 10748.">
    <original>A</original>
    <variation>V</variation>
    <location>
        <position position="195"/>
    </location>
</feature>
<feature type="sequence variant" description="In strain: NCIB 10691 and CER 89L1105.">
    <original>D</original>
    <variation>A</variation>
    <location>
        <position position="202"/>
    </location>
</feature>
<feature type="sequence variant" description="In strain: NCIB 10691 and CER 89L1105.">
    <original>A</original>
    <variation>T</variation>
    <location>
        <position position="205"/>
    </location>
</feature>
<feature type="sequence variant" description="In strain: 8-6.">
    <original>K</original>
    <variation>N</variation>
    <location>
        <position position="281"/>
    </location>
</feature>
<feature type="sequence variant" description="In strain: 8-6.">
    <original>T</original>
    <variation>A</variation>
    <location>
        <position position="329"/>
    </location>
</feature>
<feature type="sequence variant" description="In strain: NCIB 10691 and CER 89L1105.">
    <original>P</original>
    <variation>S</variation>
    <location>
        <position position="363"/>
    </location>
</feature>
<feature type="sequence variant" description="In strain: PB6K.">
    <original>I</original>
    <variation>L</variation>
    <location>
        <position position="373"/>
    </location>
</feature>
<feature type="sequence variant" description="In strain: 8-6, NCIB 10662, L9, NCIB 10663, NCIB 10748, CER 89L43 and KZ1340.">
    <original>I</original>
    <variation>V</variation>
    <location>
        <position position="373"/>
    </location>
</feature>
<feature type="mutagenesis site" description="Loss of all enzyme activities." evidence="4">
    <original>W</original>
    <variation>S</variation>
    <location>
        <position position="29"/>
    </location>
</feature>
<feature type="mutagenesis site" description="No enzyme accumulates." evidence="4">
    <original>H</original>
    <variation>G</variation>
    <variation>L</variation>
    <location>
        <position position="39"/>
    </location>
</feature>
<feature type="mutagenesis site" description="Loss of all enzyme activities." evidence="4">
    <original>H</original>
    <variation>S</variation>
    <location>
        <position position="39"/>
    </location>
</feature>
<feature type="mutagenesis site" description="Loss of all enzyme activities." evidence="4">
    <original>D</original>
    <variation>N</variation>
    <location>
        <position position="84"/>
    </location>
</feature>
<feature type="mutagenesis site" description="Loss of all enzyme activities." evidence="4">
    <original>H</original>
    <variation>G</variation>
    <variation>S</variation>
    <location>
        <position position="96"/>
    </location>
</feature>
<feature type="mutagenesis site" description="Loss of all enzyme activities." evidence="4">
    <original>F</original>
    <variation>C</variation>
    <location>
        <position position="97"/>
    </location>
</feature>
<feature type="mutagenesis site" description="Loss of all enzyme activities." evidence="4">
    <original>H</original>
    <variation>G</variation>
    <variation>S</variation>
    <location>
        <position position="154"/>
    </location>
</feature>
<feature type="mutagenesis site" description="Loss of all enzyme activities." evidence="4">
    <original>D</original>
    <variation>N</variation>
    <location>
        <position position="158"/>
    </location>
</feature>
<feature type="mutagenesis site" description="Loss of all enzyme activities." evidence="4">
    <original>H</original>
    <variation>A</variation>
    <variation>G</variation>
    <variation>S</variation>
    <location>
        <position position="164"/>
    </location>
</feature>
<feature type="mutagenesis site" description="Loss of all enzyme activities." evidence="4">
    <original>H</original>
    <variation>G</variation>
    <variation>L</variation>
    <variation>S</variation>
    <location>
        <position position="176"/>
    </location>
</feature>
<feature type="mutagenesis site" description="Loss of all enzyme activities." evidence="4">
    <original>E</original>
    <variation>Q</variation>
    <location>
        <position position="180"/>
    </location>
</feature>
<feature type="mutagenesis site" description="Increased dependence of PLC on Ca(2+). Dramatically decreases hemolytic, cytotoxic and myotoxic activities." evidence="5">
    <original>D</original>
    <variation>N</variation>
    <location>
        <position position="297"/>
    </location>
</feature>
<feature type="mutagenesis site" description="Significant loss of activities; protein conformation has changed." evidence="5">
    <original>T</original>
    <variation>P</variation>
    <location>
        <position position="300"/>
    </location>
</feature>
<feature type="mutagenesis site" description="Increased dependence of PLC on Ca(2+). Dramatically decreases hemolytic, cytotoxic and myotoxic activities." evidence="5">
    <original>Y</original>
    <variation>F</variation>
    <variation>N</variation>
    <location>
        <position position="303"/>
    </location>
</feature>
<feature type="mutagenesis site" description="Increased dependence of PLC on Ca(2+). Dramatically decreases hemolytic, cytotoxic and myotoxic activities." evidence="5">
    <original>D</original>
    <variation>N</variation>
    <location>
        <position position="364"/>
    </location>
</feature>
<feature type="turn" evidence="7">
    <location>
        <begin position="33"/>
        <end position="35"/>
    </location>
</feature>
<feature type="helix" evidence="7">
    <location>
        <begin position="38"/>
        <end position="53"/>
    </location>
</feature>
<feature type="helix" evidence="7">
    <location>
        <begin position="60"/>
        <end position="71"/>
    </location>
</feature>
<feature type="helix" evidence="7">
    <location>
        <begin position="73"/>
        <end position="81"/>
    </location>
</feature>
<feature type="helix" evidence="7">
    <location>
        <begin position="82"/>
        <end position="84"/>
    </location>
</feature>
<feature type="helix" evidence="7">
    <location>
        <begin position="94"/>
        <end position="96"/>
    </location>
</feature>
<feature type="turn" evidence="7">
    <location>
        <begin position="100"/>
        <end position="102"/>
    </location>
</feature>
<feature type="turn" evidence="7">
    <location>
        <begin position="106"/>
        <end position="108"/>
    </location>
</feature>
<feature type="helix" evidence="7">
    <location>
        <begin position="122"/>
        <end position="138"/>
    </location>
</feature>
<feature type="helix" evidence="7">
    <location>
        <begin position="142"/>
        <end position="159"/>
    </location>
</feature>
<feature type="turn" evidence="7">
    <location>
        <begin position="163"/>
        <end position="167"/>
    </location>
</feature>
<feature type="turn" evidence="7">
    <location>
        <begin position="170"/>
        <end position="172"/>
    </location>
</feature>
<feature type="helix" evidence="7">
    <location>
        <begin position="175"/>
        <end position="186"/>
    </location>
</feature>
<feature type="helix" evidence="7">
    <location>
        <begin position="187"/>
        <end position="190"/>
    </location>
</feature>
<feature type="helix" evidence="7">
    <location>
        <begin position="202"/>
        <end position="209"/>
    </location>
</feature>
<feature type="helix" evidence="7">
    <location>
        <begin position="213"/>
        <end position="234"/>
    </location>
</feature>
<feature type="helix" evidence="7">
    <location>
        <begin position="242"/>
        <end position="273"/>
    </location>
</feature>
<feature type="turn" evidence="7">
    <location>
        <begin position="277"/>
        <end position="280"/>
    </location>
</feature>
<feature type="strand" evidence="7">
    <location>
        <begin position="285"/>
        <end position="292"/>
    </location>
</feature>
<feature type="strand" evidence="7">
    <location>
        <begin position="302"/>
        <end position="310"/>
    </location>
</feature>
<feature type="strand" evidence="7">
    <location>
        <begin position="315"/>
        <end position="319"/>
    </location>
</feature>
<feature type="strand" evidence="7">
    <location>
        <begin position="323"/>
        <end position="325"/>
    </location>
</feature>
<feature type="strand" evidence="7">
    <location>
        <begin position="332"/>
        <end position="338"/>
    </location>
</feature>
<feature type="helix" evidence="7">
    <location>
        <begin position="346"/>
        <end position="348"/>
    </location>
</feature>
<feature type="strand" evidence="7">
    <location>
        <begin position="349"/>
        <end position="357"/>
    </location>
</feature>
<feature type="strand" evidence="7">
    <location>
        <begin position="359"/>
        <end position="362"/>
    </location>
</feature>
<feature type="strand" evidence="7">
    <location>
        <begin position="368"/>
        <end position="375"/>
    </location>
</feature>
<feature type="strand" evidence="7">
    <location>
        <begin position="378"/>
        <end position="384"/>
    </location>
</feature>
<feature type="strand" evidence="7">
    <location>
        <begin position="394"/>
        <end position="396"/>
    </location>
</feature>